<protein>
    <recommendedName>
        <fullName>UPF0758 protein Veis_1654</fullName>
    </recommendedName>
</protein>
<dbReference type="EMBL" id="CP000542">
    <property type="protein sequence ID" value="ABM57411.1"/>
    <property type="molecule type" value="Genomic_DNA"/>
</dbReference>
<dbReference type="RefSeq" id="WP_011809418.1">
    <property type="nucleotide sequence ID" value="NC_008786.1"/>
</dbReference>
<dbReference type="SMR" id="A1WIF4"/>
<dbReference type="STRING" id="391735.Veis_1654"/>
<dbReference type="GeneID" id="76460264"/>
<dbReference type="KEGG" id="vei:Veis_1654"/>
<dbReference type="eggNOG" id="COG2003">
    <property type="taxonomic scope" value="Bacteria"/>
</dbReference>
<dbReference type="HOGENOM" id="CLU_073529_0_1_4"/>
<dbReference type="OrthoDB" id="9804482at2"/>
<dbReference type="Proteomes" id="UP000000374">
    <property type="component" value="Chromosome"/>
</dbReference>
<dbReference type="GO" id="GO:0046872">
    <property type="term" value="F:metal ion binding"/>
    <property type="evidence" value="ECO:0007669"/>
    <property type="project" value="UniProtKB-KW"/>
</dbReference>
<dbReference type="GO" id="GO:0008237">
    <property type="term" value="F:metallopeptidase activity"/>
    <property type="evidence" value="ECO:0007669"/>
    <property type="project" value="UniProtKB-KW"/>
</dbReference>
<dbReference type="GO" id="GO:0006508">
    <property type="term" value="P:proteolysis"/>
    <property type="evidence" value="ECO:0007669"/>
    <property type="project" value="UniProtKB-KW"/>
</dbReference>
<dbReference type="CDD" id="cd08071">
    <property type="entry name" value="MPN_DUF2466"/>
    <property type="match status" value="1"/>
</dbReference>
<dbReference type="Gene3D" id="3.40.140.10">
    <property type="entry name" value="Cytidine Deaminase, domain 2"/>
    <property type="match status" value="1"/>
</dbReference>
<dbReference type="InterPro" id="IPR037518">
    <property type="entry name" value="MPN"/>
</dbReference>
<dbReference type="InterPro" id="IPR025657">
    <property type="entry name" value="RadC_JAB"/>
</dbReference>
<dbReference type="InterPro" id="IPR010994">
    <property type="entry name" value="RuvA_2-like"/>
</dbReference>
<dbReference type="InterPro" id="IPR001405">
    <property type="entry name" value="UPF0758"/>
</dbReference>
<dbReference type="InterPro" id="IPR020891">
    <property type="entry name" value="UPF0758_CS"/>
</dbReference>
<dbReference type="InterPro" id="IPR046778">
    <property type="entry name" value="UPF0758_N"/>
</dbReference>
<dbReference type="NCBIfam" id="NF000642">
    <property type="entry name" value="PRK00024.1"/>
    <property type="match status" value="1"/>
</dbReference>
<dbReference type="NCBIfam" id="TIGR00608">
    <property type="entry name" value="radc"/>
    <property type="match status" value="1"/>
</dbReference>
<dbReference type="PANTHER" id="PTHR30471">
    <property type="entry name" value="DNA REPAIR PROTEIN RADC"/>
    <property type="match status" value="1"/>
</dbReference>
<dbReference type="PANTHER" id="PTHR30471:SF3">
    <property type="entry name" value="UPF0758 PROTEIN YEES-RELATED"/>
    <property type="match status" value="1"/>
</dbReference>
<dbReference type="Pfam" id="PF04002">
    <property type="entry name" value="RadC"/>
    <property type="match status" value="1"/>
</dbReference>
<dbReference type="Pfam" id="PF20582">
    <property type="entry name" value="UPF0758_N"/>
    <property type="match status" value="1"/>
</dbReference>
<dbReference type="SUPFAM" id="SSF102712">
    <property type="entry name" value="JAB1/MPN domain"/>
    <property type="match status" value="1"/>
</dbReference>
<dbReference type="SUPFAM" id="SSF47781">
    <property type="entry name" value="RuvA domain 2-like"/>
    <property type="match status" value="1"/>
</dbReference>
<dbReference type="PROSITE" id="PS50249">
    <property type="entry name" value="MPN"/>
    <property type="match status" value="1"/>
</dbReference>
<dbReference type="PROSITE" id="PS01302">
    <property type="entry name" value="UPF0758"/>
    <property type="match status" value="1"/>
</dbReference>
<gene>
    <name type="ordered locus">Veis_1654</name>
</gene>
<proteinExistence type="inferred from homology"/>
<keyword id="KW-0378">Hydrolase</keyword>
<keyword id="KW-0479">Metal-binding</keyword>
<keyword id="KW-0482">Metalloprotease</keyword>
<keyword id="KW-0645">Protease</keyword>
<keyword id="KW-1185">Reference proteome</keyword>
<keyword id="KW-0862">Zinc</keyword>
<reference key="1">
    <citation type="submission" date="2006-12" db="EMBL/GenBank/DDBJ databases">
        <title>Complete sequence of chromosome 1 of Verminephrobacter eiseniae EF01-2.</title>
        <authorList>
            <person name="Copeland A."/>
            <person name="Lucas S."/>
            <person name="Lapidus A."/>
            <person name="Barry K."/>
            <person name="Detter J.C."/>
            <person name="Glavina del Rio T."/>
            <person name="Dalin E."/>
            <person name="Tice H."/>
            <person name="Pitluck S."/>
            <person name="Chertkov O."/>
            <person name="Brettin T."/>
            <person name="Bruce D."/>
            <person name="Han C."/>
            <person name="Tapia R."/>
            <person name="Gilna P."/>
            <person name="Schmutz J."/>
            <person name="Larimer F."/>
            <person name="Land M."/>
            <person name="Hauser L."/>
            <person name="Kyrpides N."/>
            <person name="Kim E."/>
            <person name="Stahl D."/>
            <person name="Richardson P."/>
        </authorList>
    </citation>
    <scope>NUCLEOTIDE SEQUENCE [LARGE SCALE GENOMIC DNA]</scope>
    <source>
        <strain>EF01-2</strain>
    </source>
</reference>
<organism>
    <name type="scientific">Verminephrobacter eiseniae (strain EF01-2)</name>
    <dbReference type="NCBI Taxonomy" id="391735"/>
    <lineage>
        <taxon>Bacteria</taxon>
        <taxon>Pseudomonadati</taxon>
        <taxon>Pseudomonadota</taxon>
        <taxon>Betaproteobacteria</taxon>
        <taxon>Burkholderiales</taxon>
        <taxon>Comamonadaceae</taxon>
        <taxon>Verminephrobacter</taxon>
    </lineage>
</organism>
<sequence>MALKDLPADAQPREKLLARGPATLADAELLAILLRTGIMGKGVLQMAQELLDPPGVDAATGQPTGGFGGIAGLLHASAADLERIKGLGPAKRAELVAVLELARRALAQQLRECAVFDTPDAVKHYLQLQLAAKGHEVFAVLFLDNQNRLLAMEELFRGTLTQTSVYPREVVLHALHHRAAAVVLAHNHPSGSVQPSRADEALTQTLKSTLALVDVRVLDHVIVAPGQALSMAEMGLL</sequence>
<feature type="chain" id="PRO_1000070983" description="UPF0758 protein Veis_1654">
    <location>
        <begin position="1"/>
        <end position="237"/>
    </location>
</feature>
<feature type="domain" description="MPN" evidence="1">
    <location>
        <begin position="115"/>
        <end position="237"/>
    </location>
</feature>
<feature type="short sequence motif" description="JAMM motif" evidence="1">
    <location>
        <begin position="186"/>
        <end position="199"/>
    </location>
</feature>
<feature type="binding site" evidence="1">
    <location>
        <position position="186"/>
    </location>
    <ligand>
        <name>Zn(2+)</name>
        <dbReference type="ChEBI" id="CHEBI:29105"/>
        <note>catalytic</note>
    </ligand>
</feature>
<feature type="binding site" evidence="1">
    <location>
        <position position="188"/>
    </location>
    <ligand>
        <name>Zn(2+)</name>
        <dbReference type="ChEBI" id="CHEBI:29105"/>
        <note>catalytic</note>
    </ligand>
</feature>
<feature type="binding site" evidence="1">
    <location>
        <position position="199"/>
    </location>
    <ligand>
        <name>Zn(2+)</name>
        <dbReference type="ChEBI" id="CHEBI:29105"/>
        <note>catalytic</note>
    </ligand>
</feature>
<evidence type="ECO:0000255" key="1">
    <source>
        <dbReference type="PROSITE-ProRule" id="PRU01182"/>
    </source>
</evidence>
<evidence type="ECO:0000305" key="2"/>
<comment type="similarity">
    <text evidence="2">Belongs to the UPF0758 family.</text>
</comment>
<name>Y1654_VEREI</name>
<accession>A1WIF4</accession>